<protein>
    <recommendedName>
        <fullName>Transcription elongation factor GreA</fullName>
    </recommendedName>
    <alternativeName>
        <fullName>Transcript cleavage factor GreA</fullName>
    </alternativeName>
</protein>
<gene>
    <name type="primary">greA</name>
    <name type="ordered locus">HD_1699</name>
</gene>
<proteinExistence type="inferred from homology"/>
<evidence type="ECO:0000250" key="1"/>
<evidence type="ECO:0000305" key="2"/>
<accession>Q7VL00</accession>
<organism>
    <name type="scientific">Haemophilus ducreyi (strain 35000HP / ATCC 700724)</name>
    <dbReference type="NCBI Taxonomy" id="233412"/>
    <lineage>
        <taxon>Bacteria</taxon>
        <taxon>Pseudomonadati</taxon>
        <taxon>Pseudomonadota</taxon>
        <taxon>Gammaproteobacteria</taxon>
        <taxon>Pasteurellales</taxon>
        <taxon>Pasteurellaceae</taxon>
        <taxon>Haemophilus</taxon>
    </lineage>
</organism>
<comment type="function">
    <text evidence="1">Necessary for efficient RNA polymerase transcription elongation past template-encoded arresting sites. The arresting sites in DNA have the property of trapping a certain fraction of elongating RNA polymerases that pass through, resulting in locked ternary complexes. Cleavage of the nascent transcript by cleavage factors such as GreA or GreB allows the resumption of elongation from the new 3'terminus. GreA releases sequences of 2 to 3 nucleotides (By similarity).</text>
</comment>
<comment type="similarity">
    <text evidence="2">Belongs to the GreA/GreB family.</text>
</comment>
<keyword id="KW-0238">DNA-binding</keyword>
<keyword id="KW-1185">Reference proteome</keyword>
<keyword id="KW-0804">Transcription</keyword>
<keyword id="KW-0805">Transcription regulation</keyword>
<feature type="chain" id="PRO_0000176927" description="Transcription elongation factor GreA">
    <location>
        <begin position="1"/>
        <end position="158"/>
    </location>
</feature>
<dbReference type="EMBL" id="AE017143">
    <property type="protein sequence ID" value="AAP96462.1"/>
    <property type="molecule type" value="Genomic_DNA"/>
</dbReference>
<dbReference type="RefSeq" id="WP_010945491.1">
    <property type="nucleotide sequence ID" value="NC_002940.2"/>
</dbReference>
<dbReference type="SMR" id="Q7VL00"/>
<dbReference type="STRING" id="233412.HD_1699"/>
<dbReference type="GeneID" id="60733986"/>
<dbReference type="KEGG" id="hdu:HD_1699"/>
<dbReference type="eggNOG" id="COG0782">
    <property type="taxonomic scope" value="Bacteria"/>
</dbReference>
<dbReference type="HOGENOM" id="CLU_101379_2_0_6"/>
<dbReference type="OrthoDB" id="9808774at2"/>
<dbReference type="Proteomes" id="UP000001022">
    <property type="component" value="Chromosome"/>
</dbReference>
<dbReference type="GO" id="GO:0003677">
    <property type="term" value="F:DNA binding"/>
    <property type="evidence" value="ECO:0007669"/>
    <property type="project" value="UniProtKB-UniRule"/>
</dbReference>
<dbReference type="GO" id="GO:0070063">
    <property type="term" value="F:RNA polymerase binding"/>
    <property type="evidence" value="ECO:0007669"/>
    <property type="project" value="InterPro"/>
</dbReference>
<dbReference type="GO" id="GO:0006354">
    <property type="term" value="P:DNA-templated transcription elongation"/>
    <property type="evidence" value="ECO:0007669"/>
    <property type="project" value="TreeGrafter"/>
</dbReference>
<dbReference type="GO" id="GO:0032784">
    <property type="term" value="P:regulation of DNA-templated transcription elongation"/>
    <property type="evidence" value="ECO:0007669"/>
    <property type="project" value="UniProtKB-UniRule"/>
</dbReference>
<dbReference type="FunFam" id="1.10.287.180:FF:000001">
    <property type="entry name" value="Transcription elongation factor GreA"/>
    <property type="match status" value="1"/>
</dbReference>
<dbReference type="FunFam" id="3.10.50.30:FF:000001">
    <property type="entry name" value="Transcription elongation factor GreA"/>
    <property type="match status" value="1"/>
</dbReference>
<dbReference type="Gene3D" id="3.10.50.30">
    <property type="entry name" value="Transcription elongation factor, GreA/GreB, C-terminal domain"/>
    <property type="match status" value="1"/>
</dbReference>
<dbReference type="Gene3D" id="1.10.287.180">
    <property type="entry name" value="Transcription elongation factor, GreA/GreB, N-terminal domain"/>
    <property type="match status" value="1"/>
</dbReference>
<dbReference type="HAMAP" id="MF_00105">
    <property type="entry name" value="GreA_GreB"/>
    <property type="match status" value="1"/>
</dbReference>
<dbReference type="InterPro" id="IPR036953">
    <property type="entry name" value="GreA/GreB_C_sf"/>
</dbReference>
<dbReference type="InterPro" id="IPR018151">
    <property type="entry name" value="TF_GreA/GreB_CS"/>
</dbReference>
<dbReference type="InterPro" id="IPR006359">
    <property type="entry name" value="Tscrpt_elong_fac_GreA"/>
</dbReference>
<dbReference type="InterPro" id="IPR028624">
    <property type="entry name" value="Tscrpt_elong_fac_GreA/B"/>
</dbReference>
<dbReference type="InterPro" id="IPR001437">
    <property type="entry name" value="Tscrpt_elong_fac_GreA/B_C"/>
</dbReference>
<dbReference type="InterPro" id="IPR023459">
    <property type="entry name" value="Tscrpt_elong_fac_GreA/B_fam"/>
</dbReference>
<dbReference type="InterPro" id="IPR022691">
    <property type="entry name" value="Tscrpt_elong_fac_GreA/B_N"/>
</dbReference>
<dbReference type="InterPro" id="IPR036805">
    <property type="entry name" value="Tscrpt_elong_fac_GreA/B_N_sf"/>
</dbReference>
<dbReference type="NCBIfam" id="TIGR01462">
    <property type="entry name" value="greA"/>
    <property type="match status" value="1"/>
</dbReference>
<dbReference type="NCBIfam" id="NF001261">
    <property type="entry name" value="PRK00226.1-2"/>
    <property type="match status" value="1"/>
</dbReference>
<dbReference type="NCBIfam" id="NF001263">
    <property type="entry name" value="PRK00226.1-4"/>
    <property type="match status" value="1"/>
</dbReference>
<dbReference type="NCBIfam" id="NF001264">
    <property type="entry name" value="PRK00226.1-5"/>
    <property type="match status" value="1"/>
</dbReference>
<dbReference type="PANTHER" id="PTHR30437">
    <property type="entry name" value="TRANSCRIPTION ELONGATION FACTOR GREA"/>
    <property type="match status" value="1"/>
</dbReference>
<dbReference type="PANTHER" id="PTHR30437:SF4">
    <property type="entry name" value="TRANSCRIPTION ELONGATION FACTOR GREA"/>
    <property type="match status" value="1"/>
</dbReference>
<dbReference type="Pfam" id="PF01272">
    <property type="entry name" value="GreA_GreB"/>
    <property type="match status" value="1"/>
</dbReference>
<dbReference type="Pfam" id="PF03449">
    <property type="entry name" value="GreA_GreB_N"/>
    <property type="match status" value="1"/>
</dbReference>
<dbReference type="PIRSF" id="PIRSF006092">
    <property type="entry name" value="GreA_GreB"/>
    <property type="match status" value="1"/>
</dbReference>
<dbReference type="SUPFAM" id="SSF54534">
    <property type="entry name" value="FKBP-like"/>
    <property type="match status" value="1"/>
</dbReference>
<dbReference type="SUPFAM" id="SSF46557">
    <property type="entry name" value="GreA transcript cleavage protein, N-terminal domain"/>
    <property type="match status" value="1"/>
</dbReference>
<dbReference type="PROSITE" id="PS00829">
    <property type="entry name" value="GREAB_1"/>
    <property type="match status" value="1"/>
</dbReference>
<dbReference type="PROSITE" id="PS00830">
    <property type="entry name" value="GREAB_2"/>
    <property type="match status" value="1"/>
</dbReference>
<name>GREA_HAEDU</name>
<sequence>MKQIPMTVRGAELLREELEFLKNVRRPQIIDAIAEAREHGDLKENAEYHAAREQQGFCEGRIQEIEGKLGNAQVIDVAKMTNNGKVIFGATVGLVNIDTDEEVTYRIVGDDEANIKEGLISVNSPIARGLVGKSVDDSVSIITPGGKVEFDIISVEYQ</sequence>
<reference key="1">
    <citation type="submission" date="2003-06" db="EMBL/GenBank/DDBJ databases">
        <title>The complete genome sequence of Haemophilus ducreyi.</title>
        <authorList>
            <person name="Munson R.S. Jr."/>
            <person name="Ray W.C."/>
            <person name="Mahairas G."/>
            <person name="Sabo P."/>
            <person name="Mungur R."/>
            <person name="Johnson L."/>
            <person name="Nguyen D."/>
            <person name="Wang J."/>
            <person name="Forst C."/>
            <person name="Hood L."/>
        </authorList>
    </citation>
    <scope>NUCLEOTIDE SEQUENCE [LARGE SCALE GENOMIC DNA]</scope>
    <source>
        <strain>35000HP / ATCC 700724</strain>
    </source>
</reference>